<proteinExistence type="evidence at protein level"/>
<organism>
    <name type="scientific">Datura quercifolia</name>
    <name type="common">Oak leaved angel's trumpet</name>
    <name type="synonym">Chinese thorn-apple</name>
    <dbReference type="NCBI Taxonomy" id="45451"/>
    <lineage>
        <taxon>Eukaryota</taxon>
        <taxon>Viridiplantae</taxon>
        <taxon>Streptophyta</taxon>
        <taxon>Embryophyta</taxon>
        <taxon>Tracheophyta</taxon>
        <taxon>Spermatophyta</taxon>
        <taxon>Magnoliopsida</taxon>
        <taxon>eudicotyledons</taxon>
        <taxon>Gunneridae</taxon>
        <taxon>Pentapetalae</taxon>
        <taxon>asterids</taxon>
        <taxon>lamiids</taxon>
        <taxon>Solanales</taxon>
        <taxon>Solanaceae</taxon>
        <taxon>Solanoideae</taxon>
        <taxon>Datureae</taxon>
        <taxon>Datura</taxon>
    </lineage>
</organism>
<reference key="1">
    <citation type="journal article" date="1995" name="Chem. Pharm. Bull.">
        <title>Protein chemotaxonomy of genus Datura. IV. Amino acid sequence of Datura ferredoxins depends not on the species but the section of Datura plants from which it comes.</title>
        <authorList>
            <person name="Mino Y."/>
        </authorList>
    </citation>
    <scope>PROTEIN SEQUENCE</scope>
    <scope>FUNCTION</scope>
    <scope>COFACTOR</scope>
    <scope>SUBCELLULAR LOCATION</scope>
    <source>
        <tissue>Leaf</tissue>
    </source>
</reference>
<dbReference type="SMR" id="P68166"/>
<dbReference type="GO" id="GO:0009570">
    <property type="term" value="C:chloroplast stroma"/>
    <property type="evidence" value="ECO:0007669"/>
    <property type="project" value="TreeGrafter"/>
</dbReference>
<dbReference type="GO" id="GO:0051537">
    <property type="term" value="F:2 iron, 2 sulfur cluster binding"/>
    <property type="evidence" value="ECO:0007669"/>
    <property type="project" value="UniProtKB-KW"/>
</dbReference>
<dbReference type="GO" id="GO:0009055">
    <property type="term" value="F:electron transfer activity"/>
    <property type="evidence" value="ECO:0007669"/>
    <property type="project" value="InterPro"/>
</dbReference>
<dbReference type="GO" id="GO:0046872">
    <property type="term" value="F:metal ion binding"/>
    <property type="evidence" value="ECO:0007669"/>
    <property type="project" value="UniProtKB-KW"/>
</dbReference>
<dbReference type="GO" id="GO:0022900">
    <property type="term" value="P:electron transport chain"/>
    <property type="evidence" value="ECO:0007669"/>
    <property type="project" value="InterPro"/>
</dbReference>
<dbReference type="GO" id="GO:0006124">
    <property type="term" value="P:ferredoxin metabolic process"/>
    <property type="evidence" value="ECO:0007669"/>
    <property type="project" value="UniProtKB-ARBA"/>
</dbReference>
<dbReference type="CDD" id="cd00207">
    <property type="entry name" value="fer2"/>
    <property type="match status" value="1"/>
</dbReference>
<dbReference type="FunFam" id="3.10.20.30:FF:000014">
    <property type="entry name" value="Ferredoxin"/>
    <property type="match status" value="1"/>
</dbReference>
<dbReference type="Gene3D" id="3.10.20.30">
    <property type="match status" value="1"/>
</dbReference>
<dbReference type="InterPro" id="IPR036010">
    <property type="entry name" value="2Fe-2S_ferredoxin-like_sf"/>
</dbReference>
<dbReference type="InterPro" id="IPR001041">
    <property type="entry name" value="2Fe-2S_ferredoxin-type"/>
</dbReference>
<dbReference type="InterPro" id="IPR006058">
    <property type="entry name" value="2Fe2S_fd_BS"/>
</dbReference>
<dbReference type="InterPro" id="IPR012675">
    <property type="entry name" value="Beta-grasp_dom_sf"/>
</dbReference>
<dbReference type="InterPro" id="IPR010241">
    <property type="entry name" value="Fd_pln"/>
</dbReference>
<dbReference type="NCBIfam" id="TIGR02008">
    <property type="entry name" value="fdx_plant"/>
    <property type="match status" value="1"/>
</dbReference>
<dbReference type="PANTHER" id="PTHR43112">
    <property type="entry name" value="FERREDOXIN"/>
    <property type="match status" value="1"/>
</dbReference>
<dbReference type="PANTHER" id="PTHR43112:SF3">
    <property type="entry name" value="FERREDOXIN-2, CHLOROPLASTIC"/>
    <property type="match status" value="1"/>
</dbReference>
<dbReference type="Pfam" id="PF00111">
    <property type="entry name" value="Fer2"/>
    <property type="match status" value="1"/>
</dbReference>
<dbReference type="SUPFAM" id="SSF54292">
    <property type="entry name" value="2Fe-2S ferredoxin-like"/>
    <property type="match status" value="1"/>
</dbReference>
<dbReference type="PROSITE" id="PS00197">
    <property type="entry name" value="2FE2S_FER_1"/>
    <property type="match status" value="1"/>
</dbReference>
<dbReference type="PROSITE" id="PS51085">
    <property type="entry name" value="2FE2S_FER_2"/>
    <property type="match status" value="1"/>
</dbReference>
<evidence type="ECO:0000255" key="1">
    <source>
        <dbReference type="PROSITE-ProRule" id="PRU00465"/>
    </source>
</evidence>
<evidence type="ECO:0000269" key="2">
    <source>
    </source>
</evidence>
<evidence type="ECO:0000305" key="3"/>
<name>FER_DATQU</name>
<comment type="function">
    <text evidence="2">Ferredoxins are iron-sulfur proteins that transfer electrons in a wide variety of metabolic reactions.</text>
</comment>
<comment type="cofactor">
    <cofactor evidence="2">
        <name>[2Fe-2S] cluster</name>
        <dbReference type="ChEBI" id="CHEBI:190135"/>
    </cofactor>
    <text evidence="2">Binds 1 [2Fe-2S] cluster.</text>
</comment>
<comment type="subcellular location">
    <subcellularLocation>
        <location evidence="2">Plastid</location>
        <location evidence="2">Chloroplast</location>
    </subcellularLocation>
</comment>
<comment type="similarity">
    <text evidence="3">Belongs to the 2Fe2S plant-type ferredoxin family.</text>
</comment>
<feature type="chain" id="PRO_0000189324" description="Ferredoxin">
    <location>
        <begin position="1"/>
        <end position="97"/>
    </location>
</feature>
<feature type="domain" description="2Fe-2S ferredoxin-type" evidence="1">
    <location>
        <begin position="3"/>
        <end position="93"/>
    </location>
</feature>
<feature type="binding site" evidence="1">
    <location>
        <position position="39"/>
    </location>
    <ligand>
        <name>[2Fe-2S] cluster</name>
        <dbReference type="ChEBI" id="CHEBI:190135"/>
    </ligand>
</feature>
<feature type="binding site" evidence="1">
    <location>
        <position position="44"/>
    </location>
    <ligand>
        <name>[2Fe-2S] cluster</name>
        <dbReference type="ChEBI" id="CHEBI:190135"/>
    </ligand>
</feature>
<feature type="binding site" evidence="1">
    <location>
        <position position="47"/>
    </location>
    <ligand>
        <name>[2Fe-2S] cluster</name>
        <dbReference type="ChEBI" id="CHEBI:190135"/>
    </ligand>
</feature>
<feature type="binding site" evidence="1">
    <location>
        <position position="77"/>
    </location>
    <ligand>
        <name>[2Fe-2S] cluster</name>
        <dbReference type="ChEBI" id="CHEBI:190135"/>
    </ligand>
</feature>
<protein>
    <recommendedName>
        <fullName>Ferredoxin</fullName>
    </recommendedName>
</protein>
<sequence>ATYKVKLVTPDGPVEFNCPDDVYILDQAEEEGHDLPYSCRAGSCSSCAGKVTAGTVDQSDGNYLDDDQMADGFVLTCVAYPQSDVTIETHKEEELTG</sequence>
<accession>P68166</accession>
<accession>P81454</accession>
<keyword id="KW-0001">2Fe-2S</keyword>
<keyword id="KW-0150">Chloroplast</keyword>
<keyword id="KW-0903">Direct protein sequencing</keyword>
<keyword id="KW-0249">Electron transport</keyword>
<keyword id="KW-0408">Iron</keyword>
<keyword id="KW-0411">Iron-sulfur</keyword>
<keyword id="KW-0479">Metal-binding</keyword>
<keyword id="KW-0934">Plastid</keyword>
<keyword id="KW-0813">Transport</keyword>